<accession>O49485</accession>
<accession>Q8LGJ6</accession>
<dbReference type="EC" id="1.1.1.95" evidence="5"/>
<dbReference type="EMBL" id="AL021961">
    <property type="protein sequence ID" value="CAA17552.1"/>
    <property type="molecule type" value="Genomic_DNA"/>
</dbReference>
<dbReference type="EMBL" id="AL161585">
    <property type="protein sequence ID" value="CAB80137.1"/>
    <property type="molecule type" value="Genomic_DNA"/>
</dbReference>
<dbReference type="EMBL" id="CP002687">
    <property type="protein sequence ID" value="AEE86339.1"/>
    <property type="molecule type" value="Genomic_DNA"/>
</dbReference>
<dbReference type="EMBL" id="AY063810">
    <property type="protein sequence ID" value="AAL36166.1"/>
    <property type="molecule type" value="mRNA"/>
</dbReference>
<dbReference type="EMBL" id="AY150462">
    <property type="protein sequence ID" value="AAN12903.1"/>
    <property type="molecule type" value="mRNA"/>
</dbReference>
<dbReference type="EMBL" id="AY084236">
    <property type="protein sequence ID" value="AAM60833.1"/>
    <property type="molecule type" value="mRNA"/>
</dbReference>
<dbReference type="PIR" id="T05416">
    <property type="entry name" value="T05416"/>
</dbReference>
<dbReference type="RefSeq" id="NP_195146.1">
    <property type="nucleotide sequence ID" value="NM_119583.4"/>
</dbReference>
<dbReference type="SMR" id="O49485"/>
<dbReference type="BioGRID" id="14850">
    <property type="interactions" value="12"/>
</dbReference>
<dbReference type="FunCoup" id="O49485">
    <property type="interactions" value="2029"/>
</dbReference>
<dbReference type="IntAct" id="O49485">
    <property type="interactions" value="1"/>
</dbReference>
<dbReference type="STRING" id="3702.O49485"/>
<dbReference type="iPTMnet" id="O49485"/>
<dbReference type="SwissPalm" id="O49485"/>
<dbReference type="PaxDb" id="3702-AT4G34200.1"/>
<dbReference type="ProMEX" id="O49485"/>
<dbReference type="ProteomicsDB" id="232974"/>
<dbReference type="EnsemblPlants" id="AT4G34200.1">
    <property type="protein sequence ID" value="AT4G34200.1"/>
    <property type="gene ID" value="AT4G34200"/>
</dbReference>
<dbReference type="GeneID" id="829568"/>
<dbReference type="Gramene" id="AT4G34200.1">
    <property type="protein sequence ID" value="AT4G34200.1"/>
    <property type="gene ID" value="AT4G34200"/>
</dbReference>
<dbReference type="KEGG" id="ath:AT4G34200"/>
<dbReference type="Araport" id="AT4G34200"/>
<dbReference type="TAIR" id="AT4G34200">
    <property type="gene designation" value="EDA9"/>
</dbReference>
<dbReference type="eggNOG" id="KOG0068">
    <property type="taxonomic scope" value="Eukaryota"/>
</dbReference>
<dbReference type="HOGENOM" id="CLU_019796_8_1_1"/>
<dbReference type="InParanoid" id="O49485"/>
<dbReference type="OMA" id="NIAGMQV"/>
<dbReference type="OrthoDB" id="298012at2759"/>
<dbReference type="PhylomeDB" id="O49485"/>
<dbReference type="BioCyc" id="ARA:AT4G34200-MONOMER"/>
<dbReference type="BRENDA" id="1.1.1.95">
    <property type="organism ID" value="399"/>
</dbReference>
<dbReference type="SABIO-RK" id="O49485"/>
<dbReference type="UniPathway" id="UPA00135">
    <property type="reaction ID" value="UER00196"/>
</dbReference>
<dbReference type="CD-CODE" id="4299E36E">
    <property type="entry name" value="Nucleolus"/>
</dbReference>
<dbReference type="PRO" id="PR:O49485"/>
<dbReference type="Proteomes" id="UP000006548">
    <property type="component" value="Chromosome 4"/>
</dbReference>
<dbReference type="ExpressionAtlas" id="O49485">
    <property type="expression patterns" value="baseline and differential"/>
</dbReference>
<dbReference type="GO" id="GO:0009507">
    <property type="term" value="C:chloroplast"/>
    <property type="evidence" value="ECO:0007005"/>
    <property type="project" value="TAIR"/>
</dbReference>
<dbReference type="GO" id="GO:0009570">
    <property type="term" value="C:chloroplast stroma"/>
    <property type="evidence" value="ECO:0007005"/>
    <property type="project" value="TAIR"/>
</dbReference>
<dbReference type="GO" id="GO:0005739">
    <property type="term" value="C:mitochondrion"/>
    <property type="evidence" value="ECO:0007005"/>
    <property type="project" value="TAIR"/>
</dbReference>
<dbReference type="GO" id="GO:0005886">
    <property type="term" value="C:plasma membrane"/>
    <property type="evidence" value="ECO:0007005"/>
    <property type="project" value="TAIR"/>
</dbReference>
<dbReference type="GO" id="GO:0009536">
    <property type="term" value="C:plastid"/>
    <property type="evidence" value="ECO:0000314"/>
    <property type="project" value="TAIR"/>
</dbReference>
<dbReference type="GO" id="GO:0005524">
    <property type="term" value="F:ATP binding"/>
    <property type="evidence" value="ECO:0007005"/>
    <property type="project" value="TAIR"/>
</dbReference>
<dbReference type="GO" id="GO:0051287">
    <property type="term" value="F:NAD binding"/>
    <property type="evidence" value="ECO:0007669"/>
    <property type="project" value="InterPro"/>
</dbReference>
<dbReference type="GO" id="GO:0004617">
    <property type="term" value="F:phosphoglycerate dehydrogenase activity"/>
    <property type="evidence" value="ECO:0000315"/>
    <property type="project" value="TAIR"/>
</dbReference>
<dbReference type="GO" id="GO:0009793">
    <property type="term" value="P:embryo development ending in seed dormancy"/>
    <property type="evidence" value="ECO:0000315"/>
    <property type="project" value="TAIR"/>
</dbReference>
<dbReference type="GO" id="GO:0006564">
    <property type="term" value="P:L-serine biosynthetic process"/>
    <property type="evidence" value="ECO:0007669"/>
    <property type="project" value="InterPro"/>
</dbReference>
<dbReference type="GO" id="GO:0009561">
    <property type="term" value="P:megagametogenesis"/>
    <property type="evidence" value="ECO:0000315"/>
    <property type="project" value="TAIR"/>
</dbReference>
<dbReference type="GO" id="GO:0009555">
    <property type="term" value="P:pollen development"/>
    <property type="evidence" value="ECO:0000315"/>
    <property type="project" value="TAIR"/>
</dbReference>
<dbReference type="GO" id="GO:0000096">
    <property type="term" value="P:sulfur amino acid metabolic process"/>
    <property type="evidence" value="ECO:0000315"/>
    <property type="project" value="TAIR"/>
</dbReference>
<dbReference type="CDD" id="cd04902">
    <property type="entry name" value="ACT_3PGDH-xct"/>
    <property type="match status" value="1"/>
</dbReference>
<dbReference type="CDD" id="cd12173">
    <property type="entry name" value="PGDH_4"/>
    <property type="match status" value="1"/>
</dbReference>
<dbReference type="FunFam" id="3.30.1330.90:FF:000003">
    <property type="entry name" value="D-3-phosphoglycerate dehydrogenase"/>
    <property type="match status" value="1"/>
</dbReference>
<dbReference type="FunFam" id="3.40.50.720:FF:000021">
    <property type="entry name" value="D-3-phosphoglycerate dehydrogenase"/>
    <property type="match status" value="1"/>
</dbReference>
<dbReference type="FunFam" id="3.40.50.720:FF:000616">
    <property type="entry name" value="D-3-phosphoglycerate dehydrogenase 2 chloroplastic"/>
    <property type="match status" value="1"/>
</dbReference>
<dbReference type="FunFam" id="3.30.70.260:FF:000008">
    <property type="entry name" value="D-3-phosphoglycerate dehydrogenase, chloroplastic"/>
    <property type="match status" value="1"/>
</dbReference>
<dbReference type="Gene3D" id="3.30.70.260">
    <property type="match status" value="1"/>
</dbReference>
<dbReference type="Gene3D" id="3.30.1330.90">
    <property type="entry name" value="D-3-phosphoglycerate dehydrogenase, domain 3"/>
    <property type="match status" value="1"/>
</dbReference>
<dbReference type="Gene3D" id="3.40.50.720">
    <property type="entry name" value="NAD(P)-binding Rossmann-like Domain"/>
    <property type="match status" value="2"/>
</dbReference>
<dbReference type="InterPro" id="IPR045865">
    <property type="entry name" value="ACT-like_dom_sf"/>
</dbReference>
<dbReference type="InterPro" id="IPR002912">
    <property type="entry name" value="ACT_dom"/>
</dbReference>
<dbReference type="InterPro" id="IPR015878">
    <property type="entry name" value="Ado_hCys_hydrolase_NAD-bd"/>
</dbReference>
<dbReference type="InterPro" id="IPR029009">
    <property type="entry name" value="ASB_dom_sf"/>
</dbReference>
<dbReference type="InterPro" id="IPR006139">
    <property type="entry name" value="D-isomer_2_OHA_DH_cat_dom"/>
</dbReference>
<dbReference type="InterPro" id="IPR029753">
    <property type="entry name" value="D-isomer_DH_CS"/>
</dbReference>
<dbReference type="InterPro" id="IPR029752">
    <property type="entry name" value="D-isomer_DH_CS1"/>
</dbReference>
<dbReference type="InterPro" id="IPR006140">
    <property type="entry name" value="D-isomer_DH_NAD-bd"/>
</dbReference>
<dbReference type="InterPro" id="IPR036291">
    <property type="entry name" value="NAD(P)-bd_dom_sf"/>
</dbReference>
<dbReference type="InterPro" id="IPR006236">
    <property type="entry name" value="PGDH"/>
</dbReference>
<dbReference type="InterPro" id="IPR045626">
    <property type="entry name" value="PGDH_ASB_dom"/>
</dbReference>
<dbReference type="NCBIfam" id="TIGR01327">
    <property type="entry name" value="PGDH"/>
    <property type="match status" value="1"/>
</dbReference>
<dbReference type="PANTHER" id="PTHR42938:SF42">
    <property type="entry name" value="D-3-PHOSPHOGLYCERATE DEHYDROGENASE 1, CHLOROPLASTIC"/>
    <property type="match status" value="1"/>
</dbReference>
<dbReference type="PANTHER" id="PTHR42938">
    <property type="entry name" value="FORMATE DEHYDROGENASE 1"/>
    <property type="match status" value="1"/>
</dbReference>
<dbReference type="Pfam" id="PF00389">
    <property type="entry name" value="2-Hacid_dh"/>
    <property type="match status" value="1"/>
</dbReference>
<dbReference type="Pfam" id="PF02826">
    <property type="entry name" value="2-Hacid_dh_C"/>
    <property type="match status" value="1"/>
</dbReference>
<dbReference type="Pfam" id="PF01842">
    <property type="entry name" value="ACT"/>
    <property type="match status" value="1"/>
</dbReference>
<dbReference type="Pfam" id="PF19304">
    <property type="entry name" value="PGDH_inter"/>
    <property type="match status" value="1"/>
</dbReference>
<dbReference type="SMART" id="SM00997">
    <property type="entry name" value="AdoHcyase_NAD"/>
    <property type="match status" value="1"/>
</dbReference>
<dbReference type="SUPFAM" id="SSF55021">
    <property type="entry name" value="ACT-like"/>
    <property type="match status" value="1"/>
</dbReference>
<dbReference type="SUPFAM" id="SSF52283">
    <property type="entry name" value="Formate/glycerate dehydrogenase catalytic domain-like"/>
    <property type="match status" value="1"/>
</dbReference>
<dbReference type="SUPFAM" id="SSF51735">
    <property type="entry name" value="NAD(P)-binding Rossmann-fold domains"/>
    <property type="match status" value="1"/>
</dbReference>
<dbReference type="SUPFAM" id="SSF143548">
    <property type="entry name" value="Serine metabolism enzymes domain"/>
    <property type="match status" value="1"/>
</dbReference>
<dbReference type="PROSITE" id="PS51671">
    <property type="entry name" value="ACT"/>
    <property type="match status" value="1"/>
</dbReference>
<dbReference type="PROSITE" id="PS00065">
    <property type="entry name" value="D_2_HYDROXYACID_DH_1"/>
    <property type="match status" value="1"/>
</dbReference>
<dbReference type="PROSITE" id="PS00670">
    <property type="entry name" value="D_2_HYDROXYACID_DH_2"/>
    <property type="match status" value="1"/>
</dbReference>
<dbReference type="PROSITE" id="PS00671">
    <property type="entry name" value="D_2_HYDROXYACID_DH_3"/>
    <property type="match status" value="1"/>
</dbReference>
<protein>
    <recommendedName>
        <fullName>D-3-phosphoglycerate dehydrogenase 1, chloroplastic</fullName>
        <ecNumber evidence="5">1.1.1.95</ecNumber>
    </recommendedName>
    <alternativeName>
        <fullName>Protein EMBRYO SAC DEVELOPMENT ARREST 9</fullName>
    </alternativeName>
</protein>
<comment type="function">
    <text evidence="4 5">Involved in the plastidial phosphorylated pathway of serine biosynthesis (PPSB). Required for mature pollen development.</text>
</comment>
<comment type="catalytic activity">
    <reaction evidence="5">
        <text>(2R)-3-phosphoglycerate + NAD(+) = 3-phosphooxypyruvate + NADH + H(+)</text>
        <dbReference type="Rhea" id="RHEA:12641"/>
        <dbReference type="ChEBI" id="CHEBI:15378"/>
        <dbReference type="ChEBI" id="CHEBI:18110"/>
        <dbReference type="ChEBI" id="CHEBI:57540"/>
        <dbReference type="ChEBI" id="CHEBI:57945"/>
        <dbReference type="ChEBI" id="CHEBI:58272"/>
        <dbReference type="EC" id="1.1.1.95"/>
    </reaction>
</comment>
<comment type="activity regulation">
    <text evidence="5">Partially inhibited by 5 mM serine.</text>
</comment>
<comment type="biophysicochemical properties">
    <kinetics>
        <KM evidence="5">1.308 mM for 3-phospho-D-glycerate (at pH 8.1)</KM>
        <KM evidence="5">0.39 mM for NAD(+) (at pH 8.1)</KM>
        <KM evidence="5">2.11 mM for 3-phospho-D-glycerate (at pH 7.2)</KM>
        <KM evidence="5">0.377 mM for NAD(+) (at pH 7.2)</KM>
        <Vmax evidence="5">165.0 umol/min/mg enzyme (at pH 8.1)</Vmax>
        <Vmax evidence="5">109.1 umol/min/mg enzyme (at pH 7.2)</Vmax>
    </kinetics>
</comment>
<comment type="pathway">
    <text>Amino-acid biosynthesis; L-serine biosynthesis; L-serine from 3-phospho-D-glycerate: step 1/3.</text>
</comment>
<comment type="subcellular location">
    <subcellularLocation>
        <location evidence="4 5">Plastid</location>
        <location evidence="4 5">Chloroplast</location>
    </subcellularLocation>
</comment>
<comment type="tissue specificity">
    <text evidence="4 5">Ubiquitous, but highly expressed in roots. Expressed in vasculature, root and shoot meristems, distal part of cotyledons and leaves, anther, stigma and pollen grains. Detected at the tip of the cotyledons in late embryos.</text>
</comment>
<comment type="induction">
    <text evidence="4 5">Up-regulated in the aerial parts by dark treatment, high CO(2) levels and necrotrophic pathogen infection.</text>
</comment>
<comment type="disruption phenotype">
    <text evidence="4 5">Embryo lethal when homozygous.</text>
</comment>
<comment type="similarity">
    <text evidence="6">Belongs to the D-isomer specific 2-hydroxyacid dehydrogenase family.</text>
</comment>
<gene>
    <name type="primary">PGDH1</name>
    <name type="synonym">EDA9</name>
    <name type="ordered locus">At4g34200</name>
    <name type="ORF">F10M10.7</name>
</gene>
<name>SERA1_ARATH</name>
<organism>
    <name type="scientific">Arabidopsis thaliana</name>
    <name type="common">Mouse-ear cress</name>
    <dbReference type="NCBI Taxonomy" id="3702"/>
    <lineage>
        <taxon>Eukaryota</taxon>
        <taxon>Viridiplantae</taxon>
        <taxon>Streptophyta</taxon>
        <taxon>Embryophyta</taxon>
        <taxon>Tracheophyta</taxon>
        <taxon>Spermatophyta</taxon>
        <taxon>Magnoliopsida</taxon>
        <taxon>eudicotyledons</taxon>
        <taxon>Gunneridae</taxon>
        <taxon>Pentapetalae</taxon>
        <taxon>rosids</taxon>
        <taxon>malvids</taxon>
        <taxon>Brassicales</taxon>
        <taxon>Brassicaceae</taxon>
        <taxon>Camelineae</taxon>
        <taxon>Arabidopsis</taxon>
    </lineage>
</organism>
<reference key="1">
    <citation type="journal article" date="1999" name="Nature">
        <title>Sequence and analysis of chromosome 4 of the plant Arabidopsis thaliana.</title>
        <authorList>
            <person name="Mayer K.F.X."/>
            <person name="Schueller C."/>
            <person name="Wambutt R."/>
            <person name="Murphy G."/>
            <person name="Volckaert G."/>
            <person name="Pohl T."/>
            <person name="Duesterhoeft A."/>
            <person name="Stiekema W."/>
            <person name="Entian K.-D."/>
            <person name="Terryn N."/>
            <person name="Harris B."/>
            <person name="Ansorge W."/>
            <person name="Brandt P."/>
            <person name="Grivell L.A."/>
            <person name="Rieger M."/>
            <person name="Weichselgartner M."/>
            <person name="de Simone V."/>
            <person name="Obermaier B."/>
            <person name="Mache R."/>
            <person name="Mueller M."/>
            <person name="Kreis M."/>
            <person name="Delseny M."/>
            <person name="Puigdomenech P."/>
            <person name="Watson M."/>
            <person name="Schmidtheini T."/>
            <person name="Reichert B."/>
            <person name="Portetelle D."/>
            <person name="Perez-Alonso M."/>
            <person name="Boutry M."/>
            <person name="Bancroft I."/>
            <person name="Vos P."/>
            <person name="Hoheisel J."/>
            <person name="Zimmermann W."/>
            <person name="Wedler H."/>
            <person name="Ridley P."/>
            <person name="Langham S.-A."/>
            <person name="McCullagh B."/>
            <person name="Bilham L."/>
            <person name="Robben J."/>
            <person name="van der Schueren J."/>
            <person name="Grymonprez B."/>
            <person name="Chuang Y.-J."/>
            <person name="Vandenbussche F."/>
            <person name="Braeken M."/>
            <person name="Weltjens I."/>
            <person name="Voet M."/>
            <person name="Bastiaens I."/>
            <person name="Aert R."/>
            <person name="Defoor E."/>
            <person name="Weitzenegger T."/>
            <person name="Bothe G."/>
            <person name="Ramsperger U."/>
            <person name="Hilbert H."/>
            <person name="Braun M."/>
            <person name="Holzer E."/>
            <person name="Brandt A."/>
            <person name="Peters S."/>
            <person name="van Staveren M."/>
            <person name="Dirkse W."/>
            <person name="Mooijman P."/>
            <person name="Klein Lankhorst R."/>
            <person name="Rose M."/>
            <person name="Hauf J."/>
            <person name="Koetter P."/>
            <person name="Berneiser S."/>
            <person name="Hempel S."/>
            <person name="Feldpausch M."/>
            <person name="Lamberth S."/>
            <person name="Van den Daele H."/>
            <person name="De Keyser A."/>
            <person name="Buysshaert C."/>
            <person name="Gielen J."/>
            <person name="Villarroel R."/>
            <person name="De Clercq R."/>
            <person name="van Montagu M."/>
            <person name="Rogers J."/>
            <person name="Cronin A."/>
            <person name="Quail M.A."/>
            <person name="Bray-Allen S."/>
            <person name="Clark L."/>
            <person name="Doggett J."/>
            <person name="Hall S."/>
            <person name="Kay M."/>
            <person name="Lennard N."/>
            <person name="McLay K."/>
            <person name="Mayes R."/>
            <person name="Pettett A."/>
            <person name="Rajandream M.A."/>
            <person name="Lyne M."/>
            <person name="Benes V."/>
            <person name="Rechmann S."/>
            <person name="Borkova D."/>
            <person name="Bloecker H."/>
            <person name="Scharfe M."/>
            <person name="Grimm M."/>
            <person name="Loehnert T.-H."/>
            <person name="Dose S."/>
            <person name="de Haan M."/>
            <person name="Maarse A.C."/>
            <person name="Schaefer M."/>
            <person name="Mueller-Auer S."/>
            <person name="Gabel C."/>
            <person name="Fuchs M."/>
            <person name="Fartmann B."/>
            <person name="Granderath K."/>
            <person name="Dauner D."/>
            <person name="Herzl A."/>
            <person name="Neumann S."/>
            <person name="Argiriou A."/>
            <person name="Vitale D."/>
            <person name="Liguori R."/>
            <person name="Piravandi E."/>
            <person name="Massenet O."/>
            <person name="Quigley F."/>
            <person name="Clabauld G."/>
            <person name="Muendlein A."/>
            <person name="Felber R."/>
            <person name="Schnabl S."/>
            <person name="Hiller R."/>
            <person name="Schmidt W."/>
            <person name="Lecharny A."/>
            <person name="Aubourg S."/>
            <person name="Chefdor F."/>
            <person name="Cooke R."/>
            <person name="Berger C."/>
            <person name="Monfort A."/>
            <person name="Casacuberta E."/>
            <person name="Gibbons T."/>
            <person name="Weber N."/>
            <person name="Vandenbol M."/>
            <person name="Bargues M."/>
            <person name="Terol J."/>
            <person name="Torres A."/>
            <person name="Perez-Perez A."/>
            <person name="Purnelle B."/>
            <person name="Bent E."/>
            <person name="Johnson S."/>
            <person name="Tacon D."/>
            <person name="Jesse T."/>
            <person name="Heijnen L."/>
            <person name="Schwarz S."/>
            <person name="Scholler P."/>
            <person name="Heber S."/>
            <person name="Francs P."/>
            <person name="Bielke C."/>
            <person name="Frishman D."/>
            <person name="Haase D."/>
            <person name="Lemcke K."/>
            <person name="Mewes H.-W."/>
            <person name="Stocker S."/>
            <person name="Zaccaria P."/>
            <person name="Bevan M."/>
            <person name="Wilson R.K."/>
            <person name="de la Bastide M."/>
            <person name="Habermann K."/>
            <person name="Parnell L."/>
            <person name="Dedhia N."/>
            <person name="Gnoj L."/>
            <person name="Schutz K."/>
            <person name="Huang E."/>
            <person name="Spiegel L."/>
            <person name="Sekhon M."/>
            <person name="Murray J."/>
            <person name="Sheet P."/>
            <person name="Cordes M."/>
            <person name="Abu-Threideh J."/>
            <person name="Stoneking T."/>
            <person name="Kalicki J."/>
            <person name="Graves T."/>
            <person name="Harmon G."/>
            <person name="Edwards J."/>
            <person name="Latreille P."/>
            <person name="Courtney L."/>
            <person name="Cloud J."/>
            <person name="Abbott A."/>
            <person name="Scott K."/>
            <person name="Johnson D."/>
            <person name="Minx P."/>
            <person name="Bentley D."/>
            <person name="Fulton B."/>
            <person name="Miller N."/>
            <person name="Greco T."/>
            <person name="Kemp K."/>
            <person name="Kramer J."/>
            <person name="Fulton L."/>
            <person name="Mardis E."/>
            <person name="Dante M."/>
            <person name="Pepin K."/>
            <person name="Hillier L.W."/>
            <person name="Nelson J."/>
            <person name="Spieth J."/>
            <person name="Ryan E."/>
            <person name="Andrews S."/>
            <person name="Geisel C."/>
            <person name="Layman D."/>
            <person name="Du H."/>
            <person name="Ali J."/>
            <person name="Berghoff A."/>
            <person name="Jones K."/>
            <person name="Drone K."/>
            <person name="Cotton M."/>
            <person name="Joshu C."/>
            <person name="Antonoiu B."/>
            <person name="Zidanic M."/>
            <person name="Strong C."/>
            <person name="Sun H."/>
            <person name="Lamar B."/>
            <person name="Yordan C."/>
            <person name="Ma P."/>
            <person name="Zhong J."/>
            <person name="Preston R."/>
            <person name="Vil D."/>
            <person name="Shekher M."/>
            <person name="Matero A."/>
            <person name="Shah R."/>
            <person name="Swaby I.K."/>
            <person name="O'Shaughnessy A."/>
            <person name="Rodriguez M."/>
            <person name="Hoffman J."/>
            <person name="Till S."/>
            <person name="Granat S."/>
            <person name="Shohdy N."/>
            <person name="Hasegawa A."/>
            <person name="Hameed A."/>
            <person name="Lodhi M."/>
            <person name="Johnson A."/>
            <person name="Chen E."/>
            <person name="Marra M.A."/>
            <person name="Martienssen R."/>
            <person name="McCombie W.R."/>
        </authorList>
    </citation>
    <scope>NUCLEOTIDE SEQUENCE [LARGE SCALE GENOMIC DNA]</scope>
    <source>
        <strain>cv. Columbia</strain>
    </source>
</reference>
<reference key="2">
    <citation type="journal article" date="2017" name="Plant J.">
        <title>Araport11: a complete reannotation of the Arabidopsis thaliana reference genome.</title>
        <authorList>
            <person name="Cheng C.Y."/>
            <person name="Krishnakumar V."/>
            <person name="Chan A.P."/>
            <person name="Thibaud-Nissen F."/>
            <person name="Schobel S."/>
            <person name="Town C.D."/>
        </authorList>
    </citation>
    <scope>GENOME REANNOTATION</scope>
    <source>
        <strain>cv. Columbia</strain>
    </source>
</reference>
<reference key="3">
    <citation type="journal article" date="2003" name="Science">
        <title>Empirical analysis of transcriptional activity in the Arabidopsis genome.</title>
        <authorList>
            <person name="Yamada K."/>
            <person name="Lim J."/>
            <person name="Dale J.M."/>
            <person name="Chen H."/>
            <person name="Shinn P."/>
            <person name="Palm C.J."/>
            <person name="Southwick A.M."/>
            <person name="Wu H.C."/>
            <person name="Kim C.J."/>
            <person name="Nguyen M."/>
            <person name="Pham P.K."/>
            <person name="Cheuk R.F."/>
            <person name="Karlin-Newmann G."/>
            <person name="Liu S.X."/>
            <person name="Lam B."/>
            <person name="Sakano H."/>
            <person name="Wu T."/>
            <person name="Yu G."/>
            <person name="Miranda M."/>
            <person name="Quach H.L."/>
            <person name="Tripp M."/>
            <person name="Chang C.H."/>
            <person name="Lee J.M."/>
            <person name="Toriumi M.J."/>
            <person name="Chan M.M."/>
            <person name="Tang C.C."/>
            <person name="Onodera C.S."/>
            <person name="Deng J.M."/>
            <person name="Akiyama K."/>
            <person name="Ansari Y."/>
            <person name="Arakawa T."/>
            <person name="Banh J."/>
            <person name="Banno F."/>
            <person name="Bowser L."/>
            <person name="Brooks S.Y."/>
            <person name="Carninci P."/>
            <person name="Chao Q."/>
            <person name="Choy N."/>
            <person name="Enju A."/>
            <person name="Goldsmith A.D."/>
            <person name="Gurjal M."/>
            <person name="Hansen N.F."/>
            <person name="Hayashizaki Y."/>
            <person name="Johnson-Hopson C."/>
            <person name="Hsuan V.W."/>
            <person name="Iida K."/>
            <person name="Karnes M."/>
            <person name="Khan S."/>
            <person name="Koesema E."/>
            <person name="Ishida J."/>
            <person name="Jiang P.X."/>
            <person name="Jones T."/>
            <person name="Kawai J."/>
            <person name="Kamiya A."/>
            <person name="Meyers C."/>
            <person name="Nakajima M."/>
            <person name="Narusaka M."/>
            <person name="Seki M."/>
            <person name="Sakurai T."/>
            <person name="Satou M."/>
            <person name="Tamse R."/>
            <person name="Vaysberg M."/>
            <person name="Wallender E.K."/>
            <person name="Wong C."/>
            <person name="Yamamura Y."/>
            <person name="Yuan S."/>
            <person name="Shinozaki K."/>
            <person name="Davis R.W."/>
            <person name="Theologis A."/>
            <person name="Ecker J.R."/>
        </authorList>
    </citation>
    <scope>NUCLEOTIDE SEQUENCE [LARGE SCALE MRNA]</scope>
    <source>
        <strain>cv. Columbia</strain>
    </source>
</reference>
<reference key="4">
    <citation type="submission" date="2002-03" db="EMBL/GenBank/DDBJ databases">
        <title>Full-length cDNA from Arabidopsis thaliana.</title>
        <authorList>
            <person name="Brover V.V."/>
            <person name="Troukhan M.E."/>
            <person name="Alexandrov N.A."/>
            <person name="Lu Y.-P."/>
            <person name="Flavell R.B."/>
            <person name="Feldmann K.A."/>
        </authorList>
    </citation>
    <scope>NUCLEOTIDE SEQUENCE [LARGE SCALE MRNA]</scope>
</reference>
<reference key="5">
    <citation type="journal article" date="2007" name="Mol. Cell. Proteomics">
        <title>Multidimensional protein identification technology (MudPIT) analysis of ubiquitinated proteins in plants.</title>
        <authorList>
            <person name="Maor R."/>
            <person name="Jones A."/>
            <person name="Nuehse T.S."/>
            <person name="Studholme D.J."/>
            <person name="Peck S.C."/>
            <person name="Shirasu K."/>
        </authorList>
    </citation>
    <scope>IDENTIFICATION BY MASS SPECTROMETRY [LARGE SCALE ANALYSIS]</scope>
    <source>
        <strain>cv. Landsberg erecta</strain>
    </source>
</reference>
<reference key="6">
    <citation type="journal article" date="2013" name="Plant Cell">
        <title>Arabidopsis phosphoglycerate dehydrogenase1 of the phosphoserine pathway is essential for development and required for ammonium assimilation and tryptophan biosynthesis.</title>
        <authorList>
            <person name="Benstein R.M."/>
            <person name="Ludewig K."/>
            <person name="Wulfert S."/>
            <person name="Wittek S."/>
            <person name="Gigolashvili T."/>
            <person name="Frerigmann H."/>
            <person name="Gierth M."/>
            <person name="Fluegge U.I."/>
            <person name="Krueger S."/>
        </authorList>
    </citation>
    <scope>FUNCTION</scope>
    <scope>CATALYTIC ACTIVITY</scope>
    <scope>BIOPHYSICOCHEMICAL PROPERTIES</scope>
    <scope>SUBCELLULAR LOCATION</scope>
    <scope>ACTIVITY REGULATION</scope>
    <scope>TISSUE SPECIFICITY</scope>
    <scope>DISRUPTION PHENOTYPE</scope>
    <scope>INDUCTION BY CO(2) AND PATHOGEN</scope>
    <source>
        <strain>cv. Columbia</strain>
    </source>
</reference>
<reference key="7">
    <citation type="journal article" date="2013" name="Plant Physiol.">
        <title>Functional characterization of the plastidial 3-phosphoglycerate dehydrogenase family in Arabidopsis.</title>
        <authorList>
            <person name="Toujani W."/>
            <person name="Munoz-Bertomeu J."/>
            <person name="Flores-Tornero M."/>
            <person name="Rosa-Tellez S."/>
            <person name="Anoman A.D."/>
            <person name="Alseekh S."/>
            <person name="Fernie A.R."/>
            <person name="Ros R."/>
        </authorList>
    </citation>
    <scope>FUNCTION</scope>
    <scope>GENE FAMILY</scope>
    <scope>NOMENCLATURE</scope>
    <scope>SUBCELLULAR LOCATION</scope>
    <scope>TISSUE SPECIFICITY</scope>
    <scope>INDUCTION</scope>
    <scope>DISRUPTION PHENOTYPE</scope>
</reference>
<proteinExistence type="evidence at protein level"/>
<evidence type="ECO:0000250" key="1"/>
<evidence type="ECO:0000250" key="2">
    <source>
        <dbReference type="UniProtKB" id="P0A9T0"/>
    </source>
</evidence>
<evidence type="ECO:0000255" key="3">
    <source>
        <dbReference type="PROSITE-ProRule" id="PRU01007"/>
    </source>
</evidence>
<evidence type="ECO:0000269" key="4">
    <source>
    </source>
</evidence>
<evidence type="ECO:0000269" key="5">
    <source>
    </source>
</evidence>
<evidence type="ECO:0000305" key="6"/>
<feature type="transit peptide" description="Chloroplast" evidence="6">
    <location>
        <begin position="1"/>
        <end position="54"/>
    </location>
</feature>
<feature type="chain" id="PRO_0000430236" description="D-3-phosphoglycerate dehydrogenase 1, chloroplastic">
    <location>
        <begin position="55"/>
        <end position="603"/>
    </location>
</feature>
<feature type="domain" description="ACT" evidence="3">
    <location>
        <begin position="531"/>
        <end position="603"/>
    </location>
</feature>
<feature type="active site" evidence="1">
    <location>
        <position position="291"/>
    </location>
</feature>
<feature type="active site" evidence="1">
    <location>
        <position position="320"/>
    </location>
</feature>
<feature type="active site" description="Proton donor" evidence="1">
    <location>
        <position position="339"/>
    </location>
</feature>
<feature type="binding site" evidence="2">
    <location>
        <begin position="210"/>
        <end position="211"/>
    </location>
    <ligand>
        <name>NAD(+)</name>
        <dbReference type="ChEBI" id="CHEBI:57540"/>
    </ligand>
</feature>
<feature type="binding site" evidence="2">
    <location>
        <position position="230"/>
    </location>
    <ligand>
        <name>NAD(+)</name>
        <dbReference type="ChEBI" id="CHEBI:57540"/>
    </ligand>
</feature>
<feature type="binding site" evidence="2">
    <location>
        <begin position="289"/>
        <end position="291"/>
    </location>
    <ligand>
        <name>NAD(+)</name>
        <dbReference type="ChEBI" id="CHEBI:57540"/>
    </ligand>
</feature>
<feature type="binding site" evidence="2">
    <location>
        <position position="315"/>
    </location>
    <ligand>
        <name>NAD(+)</name>
        <dbReference type="ChEBI" id="CHEBI:57540"/>
    </ligand>
</feature>
<feature type="binding site" evidence="2">
    <location>
        <begin position="339"/>
        <end position="342"/>
    </location>
    <ligand>
        <name>NAD(+)</name>
        <dbReference type="ChEBI" id="CHEBI:57540"/>
    </ligand>
</feature>
<feature type="sequence conflict" description="In Ref. 4; AAM60833." evidence="6" ref="4">
    <original>K</original>
    <variation>N</variation>
    <location>
        <position position="279"/>
    </location>
</feature>
<feature type="sequence conflict" description="In Ref. 4; AAM60833." evidence="6" ref="4">
    <original>E</original>
    <variation>K</variation>
    <location>
        <position position="354"/>
    </location>
</feature>
<keyword id="KW-0150">Chloroplast</keyword>
<keyword id="KW-0520">NAD</keyword>
<keyword id="KW-0560">Oxidoreductase</keyword>
<keyword id="KW-0934">Plastid</keyword>
<keyword id="KW-1185">Reference proteome</keyword>
<keyword id="KW-0809">Transit peptide</keyword>
<sequence length="603" mass="63325">MSATAAASSSIAVATNSLRNVTLSSRSPLPSAISVAFPSRGRNTLQRRLVLVSCSTGDGSKPTILVAEKLGDAGIKLLEDVANVDCSYNMTPEELNIKISLCDALIVRSGTKVGREVFESSHGRLKVVGRAGVGIDNVDLSAATEFGCLVVNAPTANTIAAAEHGIALMAAMARNVAQADASVKAGEWKRNKYVGVSLVGKTLAVLGFGKVGTEVARRAKGLGMRVIAHDPYAPADRAHAIGVDLVSFDEALATADFISLHMPLTPTTSKILNDETFAKMKKGVRIVNVARGGVIDEDALVRALDAGIVAQAALDVFTKEPPAKDSKLVQHERVTVTPHLGASTMEAQEGVAIEIAEAVVGALNGELAATAVNAPMVSAEVLTELKPYVVLAEKLGRLAVQLVAGGSGVKNAKITYASARATDDLDTRLLRAMITKGIIEPISDVYVNLVNADFTAKQRGLRLSEERVLLDGSPESPLETITVQLSNVESKFASSLSESGEVKVEGKVKDGVPHLTKVGSFEVDVTLEGSIILCRQVDQPGMIGTVGSILGESNVNVNFMSVGRIAPRKQAIMAIGVDDIPSKETLKKIGEIPAVEEFVFLKL</sequence>